<dbReference type="EMBL" id="AE000782">
    <property type="protein sequence ID" value="AAB90844.1"/>
    <property type="molecule type" value="Genomic_DNA"/>
</dbReference>
<dbReference type="PIR" id="G69299">
    <property type="entry name" value="G69299"/>
</dbReference>
<dbReference type="STRING" id="224325.AF_0399"/>
<dbReference type="PaxDb" id="224325-AF_0399"/>
<dbReference type="EnsemblBacteria" id="AAB90844">
    <property type="protein sequence ID" value="AAB90844"/>
    <property type="gene ID" value="AF_0399"/>
</dbReference>
<dbReference type="KEGG" id="afu:AF_0399"/>
<dbReference type="HOGENOM" id="CLU_1275249_0_0_2"/>
<dbReference type="Proteomes" id="UP000002199">
    <property type="component" value="Chromosome"/>
</dbReference>
<dbReference type="GO" id="GO:0005886">
    <property type="term" value="C:plasma membrane"/>
    <property type="evidence" value="ECO:0007669"/>
    <property type="project" value="UniProtKB-SubCell"/>
</dbReference>
<accession>O29848</accession>
<reference key="1">
    <citation type="journal article" date="1997" name="Nature">
        <title>The complete genome sequence of the hyperthermophilic, sulphate-reducing archaeon Archaeoglobus fulgidus.</title>
        <authorList>
            <person name="Klenk H.-P."/>
            <person name="Clayton R.A."/>
            <person name="Tomb J.-F."/>
            <person name="White O."/>
            <person name="Nelson K.E."/>
            <person name="Ketchum K.A."/>
            <person name="Dodson R.J."/>
            <person name="Gwinn M.L."/>
            <person name="Hickey E.K."/>
            <person name="Peterson J.D."/>
            <person name="Richardson D.L."/>
            <person name="Kerlavage A.R."/>
            <person name="Graham D.E."/>
            <person name="Kyrpides N.C."/>
            <person name="Fleischmann R.D."/>
            <person name="Quackenbush J."/>
            <person name="Lee N.H."/>
            <person name="Sutton G.G."/>
            <person name="Gill S.R."/>
            <person name="Kirkness E.F."/>
            <person name="Dougherty B.A."/>
            <person name="McKenney K."/>
            <person name="Adams M.D."/>
            <person name="Loftus B.J."/>
            <person name="Peterson S.N."/>
            <person name="Reich C.I."/>
            <person name="McNeil L.K."/>
            <person name="Badger J.H."/>
            <person name="Glodek A."/>
            <person name="Zhou L."/>
            <person name="Overbeek R."/>
            <person name="Gocayne J.D."/>
            <person name="Weidman J.F."/>
            <person name="McDonald L.A."/>
            <person name="Utterback T.R."/>
            <person name="Cotton M.D."/>
            <person name="Spriggs T."/>
            <person name="Artiach P."/>
            <person name="Kaine B.P."/>
            <person name="Sykes S.M."/>
            <person name="Sadow P.W."/>
            <person name="D'Andrea K.P."/>
            <person name="Bowman C."/>
            <person name="Fujii C."/>
            <person name="Garland S.A."/>
            <person name="Mason T.M."/>
            <person name="Olsen G.J."/>
            <person name="Fraser C.M."/>
            <person name="Smith H.O."/>
            <person name="Woese C.R."/>
            <person name="Venter J.C."/>
        </authorList>
    </citation>
    <scope>NUCLEOTIDE SEQUENCE [LARGE SCALE GENOMIC DNA]</scope>
    <source>
        <strain>ATCC 49558 / DSM 4304 / JCM 9628 / NBRC 100126 / VC-16</strain>
    </source>
</reference>
<comment type="subcellular location">
    <subcellularLocation>
        <location evidence="2">Cell membrane</location>
        <topology evidence="2">Multi-pass membrane protein</topology>
    </subcellularLocation>
</comment>
<protein>
    <recommendedName>
        <fullName>Uncharacterized protein AF_0399</fullName>
    </recommendedName>
</protein>
<sequence>MTNTDNMSPNFLRNAFRRLTITAIAPIVMTFEPFFIFPVVLITLARRGFVYILLPITAALILRATKVNYGPLTVSPTMHFNTPSIAVFAVLLVATTIASVFKPKLWRAFLVAIVVISILHAATPIESPVKGEGCNKISIELLDSETNFCFYISSAKTGKMWYYHATLHFMDSEGLVVNRVHLLTAALTFSSEVVEFRNEQGKFHAIFYSEVPIDSLKLKLCYFPETVIGSLPVVFCSSVDLEVR</sequence>
<keyword id="KW-1003">Cell membrane</keyword>
<keyword id="KW-0472">Membrane</keyword>
<keyword id="KW-1185">Reference proteome</keyword>
<keyword id="KW-0812">Transmembrane</keyword>
<keyword id="KW-1133">Transmembrane helix</keyword>
<organism>
    <name type="scientific">Archaeoglobus fulgidus (strain ATCC 49558 / DSM 4304 / JCM 9628 / NBRC 100126 / VC-16)</name>
    <dbReference type="NCBI Taxonomy" id="224325"/>
    <lineage>
        <taxon>Archaea</taxon>
        <taxon>Methanobacteriati</taxon>
        <taxon>Methanobacteriota</taxon>
        <taxon>Archaeoglobi</taxon>
        <taxon>Archaeoglobales</taxon>
        <taxon>Archaeoglobaceae</taxon>
        <taxon>Archaeoglobus</taxon>
    </lineage>
</organism>
<gene>
    <name type="ordered locus">AF_0399</name>
</gene>
<name>Y399_ARCFU</name>
<evidence type="ECO:0000255" key="1"/>
<evidence type="ECO:0000305" key="2"/>
<feature type="chain" id="PRO_0000127869" description="Uncharacterized protein AF_0399">
    <location>
        <begin position="1"/>
        <end position="244"/>
    </location>
</feature>
<feature type="transmembrane region" description="Helical" evidence="1">
    <location>
        <begin position="20"/>
        <end position="42"/>
    </location>
</feature>
<feature type="transmembrane region" description="Helical" evidence="1">
    <location>
        <begin position="49"/>
        <end position="67"/>
    </location>
</feature>
<feature type="transmembrane region" description="Helical" evidence="1">
    <location>
        <begin position="82"/>
        <end position="101"/>
    </location>
</feature>
<feature type="transmembrane region" description="Helical" evidence="1">
    <location>
        <begin position="108"/>
        <end position="125"/>
    </location>
</feature>
<proteinExistence type="predicted"/>